<reference key="1">
    <citation type="journal article" date="2004" name="Nucleic Acids Res.">
        <title>Thermoadaptation trait revealed by the genome sequence of thermophilic Geobacillus kaustophilus.</title>
        <authorList>
            <person name="Takami H."/>
            <person name="Takaki Y."/>
            <person name="Chee G.-J."/>
            <person name="Nishi S."/>
            <person name="Shimamura S."/>
            <person name="Suzuki H."/>
            <person name="Matsui S."/>
            <person name="Uchiyama I."/>
        </authorList>
    </citation>
    <scope>NUCLEOTIDE SEQUENCE [LARGE SCALE GENOMIC DNA]</scope>
    <source>
        <strain>HTA426</strain>
    </source>
</reference>
<feature type="chain" id="PRO_0000378238" description="Putative cysteine ligase BshC">
    <location>
        <begin position="1"/>
        <end position="542"/>
    </location>
</feature>
<feature type="coiled-coil region" evidence="1">
    <location>
        <begin position="458"/>
        <end position="487"/>
    </location>
</feature>
<dbReference type="EC" id="6.-.-.-" evidence="1"/>
<dbReference type="EMBL" id="BA000043">
    <property type="protein sequence ID" value="BAD75395.1"/>
    <property type="molecule type" value="Genomic_DNA"/>
</dbReference>
<dbReference type="RefSeq" id="WP_011230610.1">
    <property type="nucleotide sequence ID" value="NC_006510.1"/>
</dbReference>
<dbReference type="SMR" id="Q5L0Y5"/>
<dbReference type="STRING" id="235909.GK1110"/>
<dbReference type="GeneID" id="32063014"/>
<dbReference type="KEGG" id="gka:GK1110"/>
<dbReference type="eggNOG" id="COG4365">
    <property type="taxonomic scope" value="Bacteria"/>
</dbReference>
<dbReference type="HOGENOM" id="CLU_022249_1_0_9"/>
<dbReference type="Proteomes" id="UP000001172">
    <property type="component" value="Chromosome"/>
</dbReference>
<dbReference type="GO" id="GO:0016874">
    <property type="term" value="F:ligase activity"/>
    <property type="evidence" value="ECO:0007669"/>
    <property type="project" value="UniProtKB-UniRule"/>
</dbReference>
<dbReference type="HAMAP" id="MF_01867">
    <property type="entry name" value="BshC"/>
    <property type="match status" value="1"/>
</dbReference>
<dbReference type="InterPro" id="IPR011199">
    <property type="entry name" value="Bacillithiol_biosynth_BshC"/>
</dbReference>
<dbReference type="InterPro" id="IPR055399">
    <property type="entry name" value="CC_BshC"/>
</dbReference>
<dbReference type="InterPro" id="IPR055398">
    <property type="entry name" value="Rossmann-like_BshC"/>
</dbReference>
<dbReference type="NCBIfam" id="TIGR03998">
    <property type="entry name" value="thiol_BshC"/>
    <property type="match status" value="1"/>
</dbReference>
<dbReference type="Pfam" id="PF24850">
    <property type="entry name" value="CC_BshC"/>
    <property type="match status" value="1"/>
</dbReference>
<dbReference type="Pfam" id="PF10079">
    <property type="entry name" value="Rossmann-like_BshC"/>
    <property type="match status" value="1"/>
</dbReference>
<dbReference type="PIRSF" id="PIRSF012535">
    <property type="entry name" value="UCP012535"/>
    <property type="match status" value="1"/>
</dbReference>
<comment type="function">
    <text evidence="1">Involved in bacillithiol (BSH) biosynthesis. May catalyze the last step of the pathway, the addition of cysteine to glucosamine malate (GlcN-Mal) to generate BSH.</text>
</comment>
<comment type="similarity">
    <text evidence="1">Belongs to the BshC family.</text>
</comment>
<sequence>MEVREIPLPAATKLAADYITGAFPAESGFAYAQADDEAFCRRLAYLQGRTYDREGLADYLRAYHRRFSASVATMANIEKLRNERSVVIVGGQQAGLLTGPLYTIYKIITIIQLAKEQERKLGVPVVPLFWIAGEDHDIAEIDHVYVVEEGEVKKAAYPHKTNEKRMAADVLLDRMAAKEWIERVVKTYGETDVTNELLFFLSSCLDEARTFVDFFAAIVLRLFADHGLVVLNAGDAAVRPLERRFFAALIERHRDVTAAVLAQQEALRTLGYAPLIEIGRDAANLFYYDGRERSLLQYDEERGLFHNKAGTLVWTREELLELAETNPARLSNNVVTRPLMQEHLLPTLAFVAGPGEIAYWAELKEAFPLFDLEMPPVVPRLQATIVSRSLQTDLSDIGLEVADVLTGRLDEAKREWREATAQAPLASAFAKAKADIDAAHRPLRELGVAIDRGLEGLVAKNAAILQAQIEFLQHALERALLRKHETEWRKFWRIETSLRPNGALQERVWNVFYYINRYGFDFVEKLLAIRSPGNGMHKIVYM</sequence>
<evidence type="ECO:0000255" key="1">
    <source>
        <dbReference type="HAMAP-Rule" id="MF_01867"/>
    </source>
</evidence>
<gene>
    <name evidence="1" type="primary">bshC</name>
    <name type="ordered locus">GK1110</name>
</gene>
<organism>
    <name type="scientific">Geobacillus kaustophilus (strain HTA426)</name>
    <dbReference type="NCBI Taxonomy" id="235909"/>
    <lineage>
        <taxon>Bacteria</taxon>
        <taxon>Bacillati</taxon>
        <taxon>Bacillota</taxon>
        <taxon>Bacilli</taxon>
        <taxon>Bacillales</taxon>
        <taxon>Anoxybacillaceae</taxon>
        <taxon>Geobacillus</taxon>
        <taxon>Geobacillus thermoleovorans group</taxon>
    </lineage>
</organism>
<proteinExistence type="inferred from homology"/>
<name>BSHC_GEOKA</name>
<keyword id="KW-0175">Coiled coil</keyword>
<keyword id="KW-0436">Ligase</keyword>
<keyword id="KW-1185">Reference proteome</keyword>
<protein>
    <recommendedName>
        <fullName evidence="1">Putative cysteine ligase BshC</fullName>
        <ecNumber evidence="1">6.-.-.-</ecNumber>
    </recommendedName>
</protein>
<accession>Q5L0Y5</accession>